<feature type="chain" id="PRO_0000117644" description="NADH-ubiquinone oxidoreductase chain 2">
    <location>
        <begin position="1"/>
        <end position="345"/>
    </location>
</feature>
<feature type="transmembrane region" description="Helical" evidence="2">
    <location>
        <begin position="1"/>
        <end position="21"/>
    </location>
</feature>
<feature type="transmembrane region" description="Helical" evidence="2">
    <location>
        <begin position="26"/>
        <end position="46"/>
    </location>
</feature>
<feature type="transmembrane region" description="Helical" evidence="2">
    <location>
        <begin position="60"/>
        <end position="80"/>
    </location>
</feature>
<feature type="transmembrane region" description="Helical" evidence="2">
    <location>
        <begin position="96"/>
        <end position="115"/>
    </location>
</feature>
<feature type="transmembrane region" description="Helical" evidence="2">
    <location>
        <begin position="122"/>
        <end position="144"/>
    </location>
</feature>
<feature type="transmembrane region" description="Helical" evidence="2">
    <location>
        <begin position="148"/>
        <end position="170"/>
    </location>
</feature>
<feature type="transmembrane region" description="Helical" evidence="2">
    <location>
        <begin position="201"/>
        <end position="223"/>
    </location>
</feature>
<feature type="transmembrane region" description="Helical" evidence="2">
    <location>
        <begin position="242"/>
        <end position="262"/>
    </location>
</feature>
<feature type="transmembrane region" description="Helical" evidence="2">
    <location>
        <begin position="274"/>
        <end position="294"/>
    </location>
</feature>
<feature type="transmembrane region" description="Helical" evidence="2">
    <location>
        <begin position="323"/>
        <end position="343"/>
    </location>
</feature>
<keyword id="KW-0249">Electron transport</keyword>
<keyword id="KW-0472">Membrane</keyword>
<keyword id="KW-0496">Mitochondrion</keyword>
<keyword id="KW-0999">Mitochondrion inner membrane</keyword>
<keyword id="KW-0520">NAD</keyword>
<keyword id="KW-0679">Respiratory chain</keyword>
<keyword id="KW-1278">Translocase</keyword>
<keyword id="KW-0812">Transmembrane</keyword>
<keyword id="KW-1133">Transmembrane helix</keyword>
<keyword id="KW-0813">Transport</keyword>
<keyword id="KW-0830">Ubiquinone</keyword>
<gene>
    <name type="primary">MT-ND2</name>
    <name type="synonym">MTND2</name>
    <name type="synonym">NADH2</name>
    <name type="synonym">ND2</name>
</gene>
<proteinExistence type="inferred from homology"/>
<geneLocation type="mitochondrion"/>
<comment type="function">
    <text evidence="1">Core subunit of the mitochondrial membrane respiratory chain NADH dehydrogenase (Complex I) that is believed to belong to the minimal assembly required for catalysis. Complex I functions in the transfer of electrons from NADH to the respiratory chain. The immediate electron acceptor for the enzyme is believed to be ubiquinone (By similarity).</text>
</comment>
<comment type="catalytic activity">
    <reaction>
        <text>a ubiquinone + NADH + 5 H(+)(in) = a ubiquinol + NAD(+) + 4 H(+)(out)</text>
        <dbReference type="Rhea" id="RHEA:29091"/>
        <dbReference type="Rhea" id="RHEA-COMP:9565"/>
        <dbReference type="Rhea" id="RHEA-COMP:9566"/>
        <dbReference type="ChEBI" id="CHEBI:15378"/>
        <dbReference type="ChEBI" id="CHEBI:16389"/>
        <dbReference type="ChEBI" id="CHEBI:17976"/>
        <dbReference type="ChEBI" id="CHEBI:57540"/>
        <dbReference type="ChEBI" id="CHEBI:57945"/>
        <dbReference type="EC" id="7.1.1.2"/>
    </reaction>
</comment>
<comment type="subcellular location">
    <subcellularLocation>
        <location>Mitochondrion inner membrane</location>
        <topology>Multi-pass membrane protein</topology>
    </subcellularLocation>
</comment>
<comment type="similarity">
    <text evidence="3">Belongs to the complex I subunit 2 family.</text>
</comment>
<organism>
    <name type="scientific">Varanus nebulosus</name>
    <name type="common">Clouded monitor</name>
    <name type="synonym">Varanus bengalensis nebulosus</name>
    <dbReference type="NCBI Taxonomy" id="735376"/>
    <lineage>
        <taxon>Eukaryota</taxon>
        <taxon>Metazoa</taxon>
        <taxon>Chordata</taxon>
        <taxon>Craniata</taxon>
        <taxon>Vertebrata</taxon>
        <taxon>Euteleostomi</taxon>
        <taxon>Lepidosauria</taxon>
        <taxon>Squamata</taxon>
        <taxon>Bifurcata</taxon>
        <taxon>Unidentata</taxon>
        <taxon>Episquamata</taxon>
        <taxon>Toxicofera</taxon>
        <taxon>Anguimorpha</taxon>
        <taxon>Paleoanguimorpha</taxon>
        <taxon>Varanoidea</taxon>
        <taxon>Varanidae</taxon>
        <taxon>Varanus</taxon>
    </lineage>
</organism>
<protein>
    <recommendedName>
        <fullName>NADH-ubiquinone oxidoreductase chain 2</fullName>
        <ecNumber>7.1.1.2</ecNumber>
    </recommendedName>
    <alternativeName>
        <fullName>NADH dehydrogenase subunit 2</fullName>
    </alternativeName>
</protein>
<dbReference type="EC" id="7.1.1.2"/>
<dbReference type="EMBL" id="AF407492">
    <property type="protein sequence ID" value="AAL10030.1"/>
    <property type="molecule type" value="Genomic_DNA"/>
</dbReference>
<dbReference type="SMR" id="Q94VJ5"/>
<dbReference type="GO" id="GO:0005743">
    <property type="term" value="C:mitochondrial inner membrane"/>
    <property type="evidence" value="ECO:0007669"/>
    <property type="project" value="UniProtKB-SubCell"/>
</dbReference>
<dbReference type="GO" id="GO:0008137">
    <property type="term" value="F:NADH dehydrogenase (ubiquinone) activity"/>
    <property type="evidence" value="ECO:0007669"/>
    <property type="project" value="UniProtKB-EC"/>
</dbReference>
<dbReference type="GO" id="GO:0006120">
    <property type="term" value="P:mitochondrial electron transport, NADH to ubiquinone"/>
    <property type="evidence" value="ECO:0007669"/>
    <property type="project" value="InterPro"/>
</dbReference>
<dbReference type="InterPro" id="IPR050175">
    <property type="entry name" value="Complex_I_Subunit_2"/>
</dbReference>
<dbReference type="InterPro" id="IPR010933">
    <property type="entry name" value="NADH_DH_su2_C"/>
</dbReference>
<dbReference type="InterPro" id="IPR003917">
    <property type="entry name" value="NADH_UbQ_OxRdtase_chain2"/>
</dbReference>
<dbReference type="InterPro" id="IPR001750">
    <property type="entry name" value="ND/Mrp_TM"/>
</dbReference>
<dbReference type="PANTHER" id="PTHR46552">
    <property type="entry name" value="NADH-UBIQUINONE OXIDOREDUCTASE CHAIN 2"/>
    <property type="match status" value="1"/>
</dbReference>
<dbReference type="PANTHER" id="PTHR46552:SF1">
    <property type="entry name" value="NADH-UBIQUINONE OXIDOREDUCTASE CHAIN 2"/>
    <property type="match status" value="1"/>
</dbReference>
<dbReference type="Pfam" id="PF06444">
    <property type="entry name" value="NADH_dehy_S2_C"/>
    <property type="match status" value="1"/>
</dbReference>
<dbReference type="Pfam" id="PF00361">
    <property type="entry name" value="Proton_antipo_M"/>
    <property type="match status" value="1"/>
</dbReference>
<dbReference type="PRINTS" id="PR01436">
    <property type="entry name" value="NADHDHGNASE2"/>
</dbReference>
<sequence length="345" mass="37859">MNPLINFILLSSMIAGTILTTTSHHWVSAWLGLELNTLAIIPIISMTHHPRATEASTKYFLIQAASSALVLLSGIINAHLHGSWDISQLSDNFSKIALTTALATKLGLAPIHFWLPEILQGVPILTALIIATWQKIAPMALLIMIWDLIPTPITLIMGLTSTIVGGLGGLNQTQLRKTMAFSSIAHLGWMITMMTIAPNLTLLNLILYIPMTSLTMLIMHLTMSKTLQNAMLIPSHSLTATSLFLLSLLSLGGLPPLSGFIPKWLILQELTIHNLTPMAFMMAITALLSLMFYLRITYISTMTLPPSTTPLKNTWRFKSHQNTSTLPLLSLISIFLLPITPTLTQ</sequence>
<accession>Q94VJ5</accession>
<name>NU2M_VARNE</name>
<evidence type="ECO:0000250" key="1"/>
<evidence type="ECO:0000255" key="2"/>
<evidence type="ECO:0000305" key="3"/>
<reference key="1">
    <citation type="journal article" date="2001" name="Cladistics">
        <title>Mitochondrial DNA evidence and evolution in Varanoidea (Squamata).</title>
        <authorList>
            <person name="Ast J.C."/>
        </authorList>
    </citation>
    <scope>NUCLEOTIDE SEQUENCE [GENOMIC DNA]</scope>
    <source>
        <strain>Isolate ROM 35017</strain>
    </source>
</reference>